<keyword id="KW-0378">Hydrolase</keyword>
<keyword id="KW-0408">Iron</keyword>
<keyword id="KW-0479">Metal-binding</keyword>
<keyword id="KW-0648">Protein biosynthesis</keyword>
<keyword id="KW-1185">Reference proteome</keyword>
<name>DEF_ECOL6</name>
<organism>
    <name type="scientific">Escherichia coli O6:H1 (strain CFT073 / ATCC 700928 / UPEC)</name>
    <dbReference type="NCBI Taxonomy" id="199310"/>
    <lineage>
        <taxon>Bacteria</taxon>
        <taxon>Pseudomonadati</taxon>
        <taxon>Pseudomonadota</taxon>
        <taxon>Gammaproteobacteria</taxon>
        <taxon>Enterobacterales</taxon>
        <taxon>Enterobacteriaceae</taxon>
        <taxon>Escherichia</taxon>
    </lineage>
</organism>
<comment type="function">
    <text evidence="2">Removes the formyl group from the N-terminal Met of newly synthesized proteins. Requires at least a dipeptide for an efficient rate of reaction. N-terminal L-methionine is a prerequisite for activity but the enzyme has broad specificity at other positions.</text>
</comment>
<comment type="catalytic activity">
    <reaction evidence="2">
        <text>N-terminal N-formyl-L-methionyl-[peptide] + H2O = N-terminal L-methionyl-[peptide] + formate</text>
        <dbReference type="Rhea" id="RHEA:24420"/>
        <dbReference type="Rhea" id="RHEA-COMP:10639"/>
        <dbReference type="Rhea" id="RHEA-COMP:10640"/>
        <dbReference type="ChEBI" id="CHEBI:15377"/>
        <dbReference type="ChEBI" id="CHEBI:15740"/>
        <dbReference type="ChEBI" id="CHEBI:49298"/>
        <dbReference type="ChEBI" id="CHEBI:64731"/>
        <dbReference type="EC" id="3.5.1.88"/>
    </reaction>
</comment>
<comment type="cofactor">
    <cofactor evidence="2">
        <name>Fe(2+)</name>
        <dbReference type="ChEBI" id="CHEBI:29033"/>
    </cofactor>
    <text evidence="2">Binds 1 Fe(2+) ion.</text>
</comment>
<comment type="similarity">
    <text evidence="2">Belongs to the polypeptide deformylase family.</text>
</comment>
<protein>
    <recommendedName>
        <fullName evidence="2">Peptide deformylase</fullName>
        <shortName evidence="2">PDF</shortName>
        <ecNumber evidence="2">3.5.1.88</ecNumber>
    </recommendedName>
    <alternativeName>
        <fullName evidence="2">Polypeptide deformylase</fullName>
    </alternativeName>
</protein>
<evidence type="ECO:0000250" key="1"/>
<evidence type="ECO:0000255" key="2">
    <source>
        <dbReference type="HAMAP-Rule" id="MF_00163"/>
    </source>
</evidence>
<sequence>MSVLQVLHIPDERLRKVAKPVEEVNAEIQRIVDDMFETMYAEEGIGLAATQVDIHQRIIVIDVSENRDERLVLINPELLEKSGETGIEEGCLSIPEQRALVPRAEKVKIRALDRDGKPFELEADGLLAICIQHEMDHLVGKLFMDYLSPLKQQRIRQKVEKLDRLKARA</sequence>
<reference key="1">
    <citation type="journal article" date="2002" name="Proc. Natl. Acad. Sci. U.S.A.">
        <title>Extensive mosaic structure revealed by the complete genome sequence of uropathogenic Escherichia coli.</title>
        <authorList>
            <person name="Welch R.A."/>
            <person name="Burland V."/>
            <person name="Plunkett G. III"/>
            <person name="Redford P."/>
            <person name="Roesch P."/>
            <person name="Rasko D."/>
            <person name="Buckles E.L."/>
            <person name="Liou S.-R."/>
            <person name="Boutin A."/>
            <person name="Hackett J."/>
            <person name="Stroud D."/>
            <person name="Mayhew G.F."/>
            <person name="Rose D.J."/>
            <person name="Zhou S."/>
            <person name="Schwartz D.C."/>
            <person name="Perna N.T."/>
            <person name="Mobley H.L.T."/>
            <person name="Donnenberg M.S."/>
            <person name="Blattner F.R."/>
        </authorList>
    </citation>
    <scope>NUCLEOTIDE SEQUENCE [LARGE SCALE GENOMIC DNA]</scope>
    <source>
        <strain>CFT073 / ATCC 700928 / UPEC</strain>
    </source>
</reference>
<gene>
    <name evidence="2" type="primary">def</name>
    <name type="synonym">fms</name>
    <name type="ordered locus">c4047</name>
</gene>
<proteinExistence type="inferred from homology"/>
<accession>P0A6K4</accession>
<accession>P27251</accession>
<feature type="initiator methionine" description="Removed" evidence="1">
    <location>
        <position position="1"/>
    </location>
</feature>
<feature type="chain" id="PRO_0000082780" description="Peptide deformylase">
    <location>
        <begin position="2"/>
        <end position="169"/>
    </location>
</feature>
<feature type="active site" evidence="2">
    <location>
        <position position="134"/>
    </location>
</feature>
<feature type="binding site" evidence="2">
    <location>
        <position position="91"/>
    </location>
    <ligand>
        <name>Fe cation</name>
        <dbReference type="ChEBI" id="CHEBI:24875"/>
    </ligand>
</feature>
<feature type="binding site" evidence="2">
    <location>
        <position position="133"/>
    </location>
    <ligand>
        <name>Fe cation</name>
        <dbReference type="ChEBI" id="CHEBI:24875"/>
    </ligand>
</feature>
<feature type="binding site" evidence="2">
    <location>
        <position position="137"/>
    </location>
    <ligand>
        <name>Fe cation</name>
        <dbReference type="ChEBI" id="CHEBI:24875"/>
    </ligand>
</feature>
<dbReference type="EC" id="3.5.1.88" evidence="2"/>
<dbReference type="EMBL" id="AE014075">
    <property type="protein sequence ID" value="AAN82485.1"/>
    <property type="molecule type" value="Genomic_DNA"/>
</dbReference>
<dbReference type="RefSeq" id="WP_000114984.1">
    <property type="nucleotide sequence ID" value="NZ_CP051263.1"/>
</dbReference>
<dbReference type="SMR" id="P0A6K4"/>
<dbReference type="STRING" id="199310.c4047"/>
<dbReference type="GeneID" id="89518132"/>
<dbReference type="KEGG" id="ecc:c4047"/>
<dbReference type="eggNOG" id="COG0242">
    <property type="taxonomic scope" value="Bacteria"/>
</dbReference>
<dbReference type="HOGENOM" id="CLU_061901_2_1_6"/>
<dbReference type="BioCyc" id="ECOL199310:C4047-MONOMER"/>
<dbReference type="Proteomes" id="UP000001410">
    <property type="component" value="Chromosome"/>
</dbReference>
<dbReference type="GO" id="GO:0046872">
    <property type="term" value="F:metal ion binding"/>
    <property type="evidence" value="ECO:0007669"/>
    <property type="project" value="UniProtKB-KW"/>
</dbReference>
<dbReference type="GO" id="GO:0042586">
    <property type="term" value="F:peptide deformylase activity"/>
    <property type="evidence" value="ECO:0007669"/>
    <property type="project" value="UniProtKB-UniRule"/>
</dbReference>
<dbReference type="GO" id="GO:0043686">
    <property type="term" value="P:co-translational protein modification"/>
    <property type="evidence" value="ECO:0007669"/>
    <property type="project" value="TreeGrafter"/>
</dbReference>
<dbReference type="GO" id="GO:0006412">
    <property type="term" value="P:translation"/>
    <property type="evidence" value="ECO:0007669"/>
    <property type="project" value="UniProtKB-UniRule"/>
</dbReference>
<dbReference type="CDD" id="cd00487">
    <property type="entry name" value="Pep_deformylase"/>
    <property type="match status" value="1"/>
</dbReference>
<dbReference type="FunFam" id="3.90.45.10:FF:000001">
    <property type="entry name" value="Peptide deformylase"/>
    <property type="match status" value="1"/>
</dbReference>
<dbReference type="Gene3D" id="3.90.45.10">
    <property type="entry name" value="Peptide deformylase"/>
    <property type="match status" value="1"/>
</dbReference>
<dbReference type="HAMAP" id="MF_00163">
    <property type="entry name" value="Pep_deformylase"/>
    <property type="match status" value="1"/>
</dbReference>
<dbReference type="InterPro" id="IPR023635">
    <property type="entry name" value="Peptide_deformylase"/>
</dbReference>
<dbReference type="InterPro" id="IPR036821">
    <property type="entry name" value="Peptide_deformylase_sf"/>
</dbReference>
<dbReference type="NCBIfam" id="TIGR00079">
    <property type="entry name" value="pept_deformyl"/>
    <property type="match status" value="1"/>
</dbReference>
<dbReference type="NCBIfam" id="NF001159">
    <property type="entry name" value="PRK00150.1-3"/>
    <property type="match status" value="1"/>
</dbReference>
<dbReference type="PANTHER" id="PTHR10458">
    <property type="entry name" value="PEPTIDE DEFORMYLASE"/>
    <property type="match status" value="1"/>
</dbReference>
<dbReference type="PANTHER" id="PTHR10458:SF21">
    <property type="entry name" value="PEPTIDE DEFORMYLASE"/>
    <property type="match status" value="1"/>
</dbReference>
<dbReference type="Pfam" id="PF01327">
    <property type="entry name" value="Pep_deformylase"/>
    <property type="match status" value="1"/>
</dbReference>
<dbReference type="PIRSF" id="PIRSF004749">
    <property type="entry name" value="Pep_def"/>
    <property type="match status" value="1"/>
</dbReference>
<dbReference type="PRINTS" id="PR01576">
    <property type="entry name" value="PDEFORMYLASE"/>
</dbReference>
<dbReference type="SUPFAM" id="SSF56420">
    <property type="entry name" value="Peptide deformylase"/>
    <property type="match status" value="1"/>
</dbReference>